<gene>
    <name evidence="1" type="primary">rpsE</name>
    <name type="ordered locus">LMOf2365_2588</name>
</gene>
<comment type="function">
    <text evidence="1">With S4 and S12 plays an important role in translational accuracy.</text>
</comment>
<comment type="function">
    <text evidence="1">Located at the back of the 30S subunit body where it stabilizes the conformation of the head with respect to the body.</text>
</comment>
<comment type="subunit">
    <text evidence="1">Part of the 30S ribosomal subunit. Contacts proteins S4 and S8.</text>
</comment>
<comment type="domain">
    <text>The N-terminal domain interacts with the head of the 30S subunit; the C-terminal domain interacts with the body and contacts protein S4. The interaction surface between S4 and S5 is involved in control of translational fidelity.</text>
</comment>
<comment type="similarity">
    <text evidence="1">Belongs to the universal ribosomal protein uS5 family.</text>
</comment>
<proteinExistence type="inferred from homology"/>
<accession>Q71WG3</accession>
<sequence length="167" mass="17456">MPEQIDGNKLDLEERVVTINRVAKVVKGGRRFRFTALVVVGDKNGHVGFGTGKAQEVPDAIRKAVEDAKKNMVLVPTVDTTIPHTVVGHFGGGEILLKPASAGSGVTAGGPVRAVLELAGVADVSSKSLGSNTPINMVRATIDGIKQLKNAEDVAKLRGKTVEELLG</sequence>
<reference key="1">
    <citation type="journal article" date="2004" name="Nucleic Acids Res.">
        <title>Whole genome comparisons of serotype 4b and 1/2a strains of the food-borne pathogen Listeria monocytogenes reveal new insights into the core genome components of this species.</title>
        <authorList>
            <person name="Nelson K.E."/>
            <person name="Fouts D.E."/>
            <person name="Mongodin E.F."/>
            <person name="Ravel J."/>
            <person name="DeBoy R.T."/>
            <person name="Kolonay J.F."/>
            <person name="Rasko D.A."/>
            <person name="Angiuoli S.V."/>
            <person name="Gill S.R."/>
            <person name="Paulsen I.T."/>
            <person name="Peterson J.D."/>
            <person name="White O."/>
            <person name="Nelson W.C."/>
            <person name="Nierman W.C."/>
            <person name="Beanan M.J."/>
            <person name="Brinkac L.M."/>
            <person name="Daugherty S.C."/>
            <person name="Dodson R.J."/>
            <person name="Durkin A.S."/>
            <person name="Madupu R."/>
            <person name="Haft D.H."/>
            <person name="Selengut J."/>
            <person name="Van Aken S.E."/>
            <person name="Khouri H.M."/>
            <person name="Fedorova N."/>
            <person name="Forberger H.A."/>
            <person name="Tran B."/>
            <person name="Kathariou S."/>
            <person name="Wonderling L.D."/>
            <person name="Uhlich G.A."/>
            <person name="Bayles D.O."/>
            <person name="Luchansky J.B."/>
            <person name="Fraser C.M."/>
        </authorList>
    </citation>
    <scope>NUCLEOTIDE SEQUENCE [LARGE SCALE GENOMIC DNA]</scope>
    <source>
        <strain>F2365</strain>
    </source>
</reference>
<keyword id="KW-0687">Ribonucleoprotein</keyword>
<keyword id="KW-0689">Ribosomal protein</keyword>
<keyword id="KW-0694">RNA-binding</keyword>
<keyword id="KW-0699">rRNA-binding</keyword>
<name>RS5_LISMF</name>
<evidence type="ECO:0000255" key="1">
    <source>
        <dbReference type="HAMAP-Rule" id="MF_01307"/>
    </source>
</evidence>
<evidence type="ECO:0000305" key="2"/>
<dbReference type="EMBL" id="AE017262">
    <property type="protein sequence ID" value="AAT05353.1"/>
    <property type="molecule type" value="Genomic_DNA"/>
</dbReference>
<dbReference type="RefSeq" id="WP_003723681.1">
    <property type="nucleotide sequence ID" value="NC_002973.6"/>
</dbReference>
<dbReference type="SMR" id="Q71WG3"/>
<dbReference type="GeneID" id="93240496"/>
<dbReference type="KEGG" id="lmf:LMOf2365_2588"/>
<dbReference type="HOGENOM" id="CLU_065898_2_2_9"/>
<dbReference type="GO" id="GO:0015935">
    <property type="term" value="C:small ribosomal subunit"/>
    <property type="evidence" value="ECO:0007669"/>
    <property type="project" value="InterPro"/>
</dbReference>
<dbReference type="GO" id="GO:0019843">
    <property type="term" value="F:rRNA binding"/>
    <property type="evidence" value="ECO:0007669"/>
    <property type="project" value="UniProtKB-UniRule"/>
</dbReference>
<dbReference type="GO" id="GO:0003735">
    <property type="term" value="F:structural constituent of ribosome"/>
    <property type="evidence" value="ECO:0007669"/>
    <property type="project" value="InterPro"/>
</dbReference>
<dbReference type="GO" id="GO:0006412">
    <property type="term" value="P:translation"/>
    <property type="evidence" value="ECO:0007669"/>
    <property type="project" value="UniProtKB-UniRule"/>
</dbReference>
<dbReference type="FunFam" id="3.30.160.20:FF:000001">
    <property type="entry name" value="30S ribosomal protein S5"/>
    <property type="match status" value="1"/>
</dbReference>
<dbReference type="FunFam" id="3.30.230.10:FF:000002">
    <property type="entry name" value="30S ribosomal protein S5"/>
    <property type="match status" value="1"/>
</dbReference>
<dbReference type="Gene3D" id="3.30.160.20">
    <property type="match status" value="1"/>
</dbReference>
<dbReference type="Gene3D" id="3.30.230.10">
    <property type="match status" value="1"/>
</dbReference>
<dbReference type="HAMAP" id="MF_01307_B">
    <property type="entry name" value="Ribosomal_uS5_B"/>
    <property type="match status" value="1"/>
</dbReference>
<dbReference type="InterPro" id="IPR020568">
    <property type="entry name" value="Ribosomal_Su5_D2-typ_SF"/>
</dbReference>
<dbReference type="InterPro" id="IPR000851">
    <property type="entry name" value="Ribosomal_uS5"/>
</dbReference>
<dbReference type="InterPro" id="IPR005712">
    <property type="entry name" value="Ribosomal_uS5_bac-type"/>
</dbReference>
<dbReference type="InterPro" id="IPR005324">
    <property type="entry name" value="Ribosomal_uS5_C"/>
</dbReference>
<dbReference type="InterPro" id="IPR013810">
    <property type="entry name" value="Ribosomal_uS5_N"/>
</dbReference>
<dbReference type="InterPro" id="IPR018192">
    <property type="entry name" value="Ribosomal_uS5_N_CS"/>
</dbReference>
<dbReference type="InterPro" id="IPR014721">
    <property type="entry name" value="Ribsml_uS5_D2-typ_fold_subgr"/>
</dbReference>
<dbReference type="NCBIfam" id="TIGR01021">
    <property type="entry name" value="rpsE_bact"/>
    <property type="match status" value="1"/>
</dbReference>
<dbReference type="PANTHER" id="PTHR48277">
    <property type="entry name" value="MITOCHONDRIAL RIBOSOMAL PROTEIN S5"/>
    <property type="match status" value="1"/>
</dbReference>
<dbReference type="PANTHER" id="PTHR48277:SF1">
    <property type="entry name" value="MITOCHONDRIAL RIBOSOMAL PROTEIN S5"/>
    <property type="match status" value="1"/>
</dbReference>
<dbReference type="Pfam" id="PF00333">
    <property type="entry name" value="Ribosomal_S5"/>
    <property type="match status" value="1"/>
</dbReference>
<dbReference type="Pfam" id="PF03719">
    <property type="entry name" value="Ribosomal_S5_C"/>
    <property type="match status" value="1"/>
</dbReference>
<dbReference type="SUPFAM" id="SSF54768">
    <property type="entry name" value="dsRNA-binding domain-like"/>
    <property type="match status" value="1"/>
</dbReference>
<dbReference type="SUPFAM" id="SSF54211">
    <property type="entry name" value="Ribosomal protein S5 domain 2-like"/>
    <property type="match status" value="1"/>
</dbReference>
<dbReference type="PROSITE" id="PS00585">
    <property type="entry name" value="RIBOSOMAL_S5"/>
    <property type="match status" value="1"/>
</dbReference>
<dbReference type="PROSITE" id="PS50881">
    <property type="entry name" value="S5_DSRBD"/>
    <property type="match status" value="1"/>
</dbReference>
<feature type="chain" id="PRO_0000131539" description="Small ribosomal subunit protein uS5">
    <location>
        <begin position="1"/>
        <end position="167"/>
    </location>
</feature>
<feature type="domain" description="S5 DRBM" evidence="1">
    <location>
        <begin position="12"/>
        <end position="75"/>
    </location>
</feature>
<protein>
    <recommendedName>
        <fullName evidence="1">Small ribosomal subunit protein uS5</fullName>
    </recommendedName>
    <alternativeName>
        <fullName evidence="2">30S ribosomal protein S5</fullName>
    </alternativeName>
</protein>
<organism>
    <name type="scientific">Listeria monocytogenes serotype 4b (strain F2365)</name>
    <dbReference type="NCBI Taxonomy" id="265669"/>
    <lineage>
        <taxon>Bacteria</taxon>
        <taxon>Bacillati</taxon>
        <taxon>Bacillota</taxon>
        <taxon>Bacilli</taxon>
        <taxon>Bacillales</taxon>
        <taxon>Listeriaceae</taxon>
        <taxon>Listeria</taxon>
    </lineage>
</organism>